<feature type="chain" id="PRO_0000102159" description="ATP-dependent DNA helicase RecG">
    <location>
        <begin position="1"/>
        <end position="831"/>
    </location>
</feature>
<feature type="domain" description="Helicase ATP-binding" evidence="3">
    <location>
        <begin position="420"/>
        <end position="581"/>
    </location>
</feature>
<feature type="domain" description="Helicase C-terminal" evidence="4">
    <location>
        <begin position="600"/>
        <end position="765"/>
    </location>
</feature>
<feature type="region of interest" description="Wedge domain" evidence="2">
    <location>
        <begin position="175"/>
        <end position="289"/>
    </location>
</feature>
<feature type="short sequence motif" description="DEAH box" evidence="3">
    <location>
        <begin position="534"/>
        <end position="537"/>
    </location>
</feature>
<feature type="binding site" evidence="3">
    <location>
        <begin position="433"/>
        <end position="440"/>
    </location>
    <ligand>
        <name>ATP</name>
        <dbReference type="ChEBI" id="CHEBI:30616"/>
    </ligand>
</feature>
<name>RECG_SYNY3</name>
<evidence type="ECO:0000250" key="1">
    <source>
        <dbReference type="UniProtKB" id="P24230"/>
    </source>
</evidence>
<evidence type="ECO:0000250" key="2">
    <source>
        <dbReference type="UniProtKB" id="Q9WY48"/>
    </source>
</evidence>
<evidence type="ECO:0000255" key="3">
    <source>
        <dbReference type="PROSITE-ProRule" id="PRU00541"/>
    </source>
</evidence>
<evidence type="ECO:0000255" key="4">
    <source>
        <dbReference type="PROSITE-ProRule" id="PRU00542"/>
    </source>
</evidence>
<evidence type="ECO:0000305" key="5"/>
<organism>
    <name type="scientific">Synechocystis sp. (strain ATCC 27184 / PCC 6803 / Kazusa)</name>
    <dbReference type="NCBI Taxonomy" id="1111708"/>
    <lineage>
        <taxon>Bacteria</taxon>
        <taxon>Bacillati</taxon>
        <taxon>Cyanobacteriota</taxon>
        <taxon>Cyanophyceae</taxon>
        <taxon>Synechococcales</taxon>
        <taxon>Merismopediaceae</taxon>
        <taxon>Synechocystis</taxon>
    </lineage>
</organism>
<sequence>MQCSLVEVSVSVDWPRLQKALTVEVERGFQNLQGKQHRFGDFLCLSFGSPPPPGSSPGDRQKWREFAQRFAQYDQLEEAERKSLVASTRRFLHQLRRSLESPPRDSVPKKDLLAQVNRPQVSEPRYPKSGQIELHTPLATVVSQSQHQTKLLKNLGLATVEDLLFYFPRDYLDYAQQVTIAELTAGETVTIVGRVVNCTCFTSPKNQNLNILQIQLRDQTGRIKLSRFYAGKRFAHRGWQEKIKKLYPPQAVVAASGLVKSSKFGLTLDNPEIEVLDRHSPSIDSFKVGRVLPVYPLTEGITADFLRKLVLACQTAIAKLSDPLPQEIREKYELIDLQTAIAQIHFPENTEKLSLARRRLVFDEFFYLQLGFLQRRYEQKQQQQSAIFTPHGELLEKFSDLLPFRLTQAQQRVVNEILQDLNKPSPMNRLVQGDVGSGKTVVGVFAILAALQGGYQAALMAPTEVLAEQHYQKLVSWFNLLYLPVELLTGSTKTAKRREIHAQLSTGQLPLLVGTHALIQETVNFQRLGLVVIDEQHRFGVQQRAKLLAKGNAPHVLSMTATPIPRTLALTLHGDLEVSQIDELPPGRQPIHTSVITAKERPQMYELIRREVAQGRQVYIIFPAIEESEKLDIKAAVEEHKYLTEKIFPNFNIGLLHGRLKSAEKEAALTAFREKQTEIIVSTTVIEVGVDVPNATVMVIENAERFGLSQLHQLRGRVGRGSHQSYCLLVTNSKSNDARQRLGVMEQSQDGFFIAEMDLRLRGPGEFLGTKQSGLPDFALASLVEDQEVLLLAREAAETMMVEDPNLEAHPDLKIKLVQRYEKLLGGEILT</sequence>
<reference key="1">
    <citation type="journal article" date="1995" name="DNA Res.">
        <title>Sequence analysis of the genome of the unicellular cyanobacterium Synechocystis sp. strain PCC6803. I. Sequence features in the 1 Mb region from map positions 64% to 92% of the genome.</title>
        <authorList>
            <person name="Kaneko T."/>
            <person name="Tanaka A."/>
            <person name="Sato S."/>
            <person name="Kotani H."/>
            <person name="Sazuka T."/>
            <person name="Miyajima N."/>
            <person name="Sugiura M."/>
            <person name="Tabata S."/>
        </authorList>
    </citation>
    <scope>NUCLEOTIDE SEQUENCE [LARGE SCALE GENOMIC DNA]</scope>
    <source>
        <strain>ATCC 27184 / PCC 6803 / N-1</strain>
    </source>
</reference>
<reference key="2">
    <citation type="journal article" date="1996" name="DNA Res.">
        <title>Sequence analysis of the genome of the unicellular cyanobacterium Synechocystis sp. strain PCC6803. II. Sequence determination of the entire genome and assignment of potential protein-coding regions.</title>
        <authorList>
            <person name="Kaneko T."/>
            <person name="Sato S."/>
            <person name="Kotani H."/>
            <person name="Tanaka A."/>
            <person name="Asamizu E."/>
            <person name="Nakamura Y."/>
            <person name="Miyajima N."/>
            <person name="Hirosawa M."/>
            <person name="Sugiura M."/>
            <person name="Sasamoto S."/>
            <person name="Kimura T."/>
            <person name="Hosouchi T."/>
            <person name="Matsuno A."/>
            <person name="Muraki A."/>
            <person name="Nakazaki N."/>
            <person name="Naruo K."/>
            <person name="Okumura S."/>
            <person name="Shimpo S."/>
            <person name="Takeuchi C."/>
            <person name="Wada T."/>
            <person name="Watanabe A."/>
            <person name="Yamada M."/>
            <person name="Yasuda M."/>
            <person name="Tabata S."/>
        </authorList>
    </citation>
    <scope>NUCLEOTIDE SEQUENCE [LARGE SCALE GENOMIC DNA]</scope>
    <source>
        <strain>ATCC 27184 / PCC 6803 / Kazusa</strain>
    </source>
</reference>
<accession>Q55681</accession>
<keyword id="KW-0067">ATP-binding</keyword>
<keyword id="KW-0227">DNA damage</keyword>
<keyword id="KW-0233">DNA recombination</keyword>
<keyword id="KW-0234">DNA repair</keyword>
<keyword id="KW-0238">DNA-binding</keyword>
<keyword id="KW-0347">Helicase</keyword>
<keyword id="KW-0378">Hydrolase</keyword>
<keyword id="KW-0413">Isomerase</keyword>
<keyword id="KW-0547">Nucleotide-binding</keyword>
<keyword id="KW-1185">Reference proteome</keyword>
<protein>
    <recommendedName>
        <fullName>ATP-dependent DNA helicase RecG</fullName>
        <ecNumber evidence="1">5.6.2.4</ecNumber>
    </recommendedName>
    <alternativeName>
        <fullName>DNA branch migration protein RecG</fullName>
    </alternativeName>
    <alternativeName>
        <fullName>Probable DNA 3'-5' helicase RecG</fullName>
    </alternativeName>
</protein>
<gene>
    <name type="primary">recG</name>
    <name type="ordered locus">slr0020</name>
</gene>
<proteinExistence type="inferred from homology"/>
<dbReference type="EC" id="5.6.2.4" evidence="1"/>
<dbReference type="EMBL" id="BA000022">
    <property type="protein sequence ID" value="BAA10207.1"/>
    <property type="molecule type" value="Genomic_DNA"/>
</dbReference>
<dbReference type="PIR" id="S76355">
    <property type="entry name" value="S76355"/>
</dbReference>
<dbReference type="SMR" id="Q55681"/>
<dbReference type="DIP" id="DIP-48810N"/>
<dbReference type="FunCoup" id="Q55681">
    <property type="interactions" value="399"/>
</dbReference>
<dbReference type="IntAct" id="Q55681">
    <property type="interactions" value="5"/>
</dbReference>
<dbReference type="STRING" id="1148.gene:10499705"/>
<dbReference type="PaxDb" id="1148-1001580"/>
<dbReference type="EnsemblBacteria" id="BAA10207">
    <property type="protein sequence ID" value="BAA10207"/>
    <property type="gene ID" value="BAA10207"/>
</dbReference>
<dbReference type="KEGG" id="syn:slr0020"/>
<dbReference type="eggNOG" id="COG1200">
    <property type="taxonomic scope" value="Bacteria"/>
</dbReference>
<dbReference type="InParanoid" id="Q55681"/>
<dbReference type="PhylomeDB" id="Q55681"/>
<dbReference type="Proteomes" id="UP000001425">
    <property type="component" value="Chromosome"/>
</dbReference>
<dbReference type="GO" id="GO:0005524">
    <property type="term" value="F:ATP binding"/>
    <property type="evidence" value="ECO:0007669"/>
    <property type="project" value="UniProtKB-KW"/>
</dbReference>
<dbReference type="GO" id="GO:0016887">
    <property type="term" value="F:ATP hydrolysis activity"/>
    <property type="evidence" value="ECO:0007669"/>
    <property type="project" value="RHEA"/>
</dbReference>
<dbReference type="GO" id="GO:0003677">
    <property type="term" value="F:DNA binding"/>
    <property type="evidence" value="ECO:0007669"/>
    <property type="project" value="UniProtKB-KW"/>
</dbReference>
<dbReference type="GO" id="GO:0003678">
    <property type="term" value="F:DNA helicase activity"/>
    <property type="evidence" value="ECO:0000318"/>
    <property type="project" value="GO_Central"/>
</dbReference>
<dbReference type="GO" id="GO:0006310">
    <property type="term" value="P:DNA recombination"/>
    <property type="evidence" value="ECO:0007669"/>
    <property type="project" value="UniProtKB-KW"/>
</dbReference>
<dbReference type="GO" id="GO:0006281">
    <property type="term" value="P:DNA repair"/>
    <property type="evidence" value="ECO:0000318"/>
    <property type="project" value="GO_Central"/>
</dbReference>
<dbReference type="CDD" id="cd17992">
    <property type="entry name" value="DEXHc_RecG"/>
    <property type="match status" value="1"/>
</dbReference>
<dbReference type="CDD" id="cd04488">
    <property type="entry name" value="RecG_wedge_OBF"/>
    <property type="match status" value="1"/>
</dbReference>
<dbReference type="CDD" id="cd18811">
    <property type="entry name" value="SF2_C_RecG"/>
    <property type="match status" value="1"/>
</dbReference>
<dbReference type="Gene3D" id="2.40.50.140">
    <property type="entry name" value="Nucleic acid-binding proteins"/>
    <property type="match status" value="1"/>
</dbReference>
<dbReference type="Gene3D" id="3.40.50.300">
    <property type="entry name" value="P-loop containing nucleotide triphosphate hydrolases"/>
    <property type="match status" value="2"/>
</dbReference>
<dbReference type="InterPro" id="IPR004609">
    <property type="entry name" value="ATP-dep_DNA_helicase_RecG"/>
</dbReference>
<dbReference type="InterPro" id="IPR011545">
    <property type="entry name" value="DEAD/DEAH_box_helicase_dom"/>
</dbReference>
<dbReference type="InterPro" id="IPR014001">
    <property type="entry name" value="Helicase_ATP-bd"/>
</dbReference>
<dbReference type="InterPro" id="IPR001650">
    <property type="entry name" value="Helicase_C-like"/>
</dbReference>
<dbReference type="InterPro" id="IPR012340">
    <property type="entry name" value="NA-bd_OB-fold"/>
</dbReference>
<dbReference type="InterPro" id="IPR027417">
    <property type="entry name" value="P-loop_NTPase"/>
</dbReference>
<dbReference type="InterPro" id="IPR047112">
    <property type="entry name" value="RecG/Mfd"/>
</dbReference>
<dbReference type="InterPro" id="IPR045562">
    <property type="entry name" value="RecG_dom3_C"/>
</dbReference>
<dbReference type="InterPro" id="IPR033454">
    <property type="entry name" value="RecG_wedge"/>
</dbReference>
<dbReference type="NCBIfam" id="NF008165">
    <property type="entry name" value="PRK10917.1-3"/>
    <property type="match status" value="1"/>
</dbReference>
<dbReference type="NCBIfam" id="NF008168">
    <property type="entry name" value="PRK10917.2-2"/>
    <property type="match status" value="1"/>
</dbReference>
<dbReference type="NCBIfam" id="NF008170">
    <property type="entry name" value="PRK10917.2-4"/>
    <property type="match status" value="1"/>
</dbReference>
<dbReference type="NCBIfam" id="TIGR00643">
    <property type="entry name" value="recG"/>
    <property type="match status" value="1"/>
</dbReference>
<dbReference type="PANTHER" id="PTHR47964">
    <property type="entry name" value="ATP-DEPENDENT DNA HELICASE HOMOLOG RECG, CHLOROPLASTIC"/>
    <property type="match status" value="1"/>
</dbReference>
<dbReference type="PANTHER" id="PTHR47964:SF1">
    <property type="entry name" value="ATP-DEPENDENT DNA HELICASE HOMOLOG RECG, CHLOROPLASTIC"/>
    <property type="match status" value="1"/>
</dbReference>
<dbReference type="Pfam" id="PF00270">
    <property type="entry name" value="DEAD"/>
    <property type="match status" value="1"/>
</dbReference>
<dbReference type="Pfam" id="PF00271">
    <property type="entry name" value="Helicase_C"/>
    <property type="match status" value="1"/>
</dbReference>
<dbReference type="Pfam" id="PF19833">
    <property type="entry name" value="RecG_dom3_C"/>
    <property type="match status" value="1"/>
</dbReference>
<dbReference type="Pfam" id="PF17191">
    <property type="entry name" value="RecG_wedge"/>
    <property type="match status" value="1"/>
</dbReference>
<dbReference type="SMART" id="SM00487">
    <property type="entry name" value="DEXDc"/>
    <property type="match status" value="1"/>
</dbReference>
<dbReference type="SMART" id="SM00490">
    <property type="entry name" value="HELICc"/>
    <property type="match status" value="1"/>
</dbReference>
<dbReference type="SUPFAM" id="SSF50249">
    <property type="entry name" value="Nucleic acid-binding proteins"/>
    <property type="match status" value="1"/>
</dbReference>
<dbReference type="SUPFAM" id="SSF52540">
    <property type="entry name" value="P-loop containing nucleoside triphosphate hydrolases"/>
    <property type="match status" value="2"/>
</dbReference>
<dbReference type="PROSITE" id="PS51192">
    <property type="entry name" value="HELICASE_ATP_BIND_1"/>
    <property type="match status" value="1"/>
</dbReference>
<dbReference type="PROSITE" id="PS51194">
    <property type="entry name" value="HELICASE_CTER"/>
    <property type="match status" value="1"/>
</dbReference>
<comment type="function">
    <text evidence="1">Plays a critical role in recombination and DNA repair. Helps process Holliday junction intermediates to mature products by catalyzing branch migration. Has replication fork regression activity, unwinds stalled or blocked replication forks to make a HJ that can be resolved. Has a DNA unwinding activity characteristic of a DNA helicase with 3'-5' polarity (By similarity).</text>
</comment>
<comment type="catalytic activity">
    <reaction evidence="1">
        <text>Couples ATP hydrolysis with the unwinding of duplex DNA by translocating in the 3'-5' direction.</text>
        <dbReference type="EC" id="5.6.2.4"/>
    </reaction>
</comment>
<comment type="catalytic activity">
    <reaction evidence="1">
        <text>ATP + H2O = ADP + phosphate + H(+)</text>
        <dbReference type="Rhea" id="RHEA:13065"/>
        <dbReference type="ChEBI" id="CHEBI:15377"/>
        <dbReference type="ChEBI" id="CHEBI:15378"/>
        <dbReference type="ChEBI" id="CHEBI:30616"/>
        <dbReference type="ChEBI" id="CHEBI:43474"/>
        <dbReference type="ChEBI" id="CHEBI:456216"/>
        <dbReference type="EC" id="5.6.2.4"/>
    </reaction>
</comment>
<comment type="subunit">
    <text evidence="2">Monomer (By similarity).</text>
</comment>
<comment type="domain">
    <text evidence="2">The wedge domain within the N-terminus inserts into the replication fork junction, where the lagging and leading strand split (By similarity).</text>
</comment>
<comment type="similarity">
    <text evidence="5">Belongs to the helicase family. RecG subfamily.</text>
</comment>